<comment type="function">
    <text evidence="1">The UvrABC repair system catalyzes the recognition and processing of DNA lesions. UvrC both incises the 5' and 3' sides of the lesion. The N-terminal half is responsible for the 3' incision and the C-terminal half is responsible for the 5' incision.</text>
</comment>
<comment type="subunit">
    <text evidence="1">Interacts with UvrB in an incision complex.</text>
</comment>
<comment type="subcellular location">
    <subcellularLocation>
        <location evidence="1">Cytoplasm</location>
    </subcellularLocation>
</comment>
<comment type="similarity">
    <text evidence="1">Belongs to the UvrC family.</text>
</comment>
<gene>
    <name evidence="1" type="primary">uvrC</name>
    <name type="ordered locus">ABSDF3216</name>
</gene>
<dbReference type="EMBL" id="CU468230">
    <property type="protein sequence ID" value="CAP02488.1"/>
    <property type="molecule type" value="Genomic_DNA"/>
</dbReference>
<dbReference type="SMR" id="B0VLX1"/>
<dbReference type="KEGG" id="abm:ABSDF3216"/>
<dbReference type="HOGENOM" id="CLU_014841_3_0_6"/>
<dbReference type="Proteomes" id="UP000001741">
    <property type="component" value="Chromosome"/>
</dbReference>
<dbReference type="GO" id="GO:0005737">
    <property type="term" value="C:cytoplasm"/>
    <property type="evidence" value="ECO:0007669"/>
    <property type="project" value="UniProtKB-SubCell"/>
</dbReference>
<dbReference type="GO" id="GO:0009380">
    <property type="term" value="C:excinuclease repair complex"/>
    <property type="evidence" value="ECO:0007669"/>
    <property type="project" value="InterPro"/>
</dbReference>
<dbReference type="GO" id="GO:0003677">
    <property type="term" value="F:DNA binding"/>
    <property type="evidence" value="ECO:0007669"/>
    <property type="project" value="UniProtKB-UniRule"/>
</dbReference>
<dbReference type="GO" id="GO:0009381">
    <property type="term" value="F:excinuclease ABC activity"/>
    <property type="evidence" value="ECO:0007669"/>
    <property type="project" value="UniProtKB-UniRule"/>
</dbReference>
<dbReference type="GO" id="GO:0006289">
    <property type="term" value="P:nucleotide-excision repair"/>
    <property type="evidence" value="ECO:0007669"/>
    <property type="project" value="UniProtKB-UniRule"/>
</dbReference>
<dbReference type="GO" id="GO:0009432">
    <property type="term" value="P:SOS response"/>
    <property type="evidence" value="ECO:0007669"/>
    <property type="project" value="UniProtKB-UniRule"/>
</dbReference>
<dbReference type="CDD" id="cd10434">
    <property type="entry name" value="GIY-YIG_UvrC_Cho"/>
    <property type="match status" value="1"/>
</dbReference>
<dbReference type="FunFam" id="3.30.420.340:FF:000001">
    <property type="entry name" value="UvrABC system protein C"/>
    <property type="match status" value="1"/>
</dbReference>
<dbReference type="FunFam" id="3.40.1440.10:FF:000001">
    <property type="entry name" value="UvrABC system protein C"/>
    <property type="match status" value="1"/>
</dbReference>
<dbReference type="Gene3D" id="1.10.150.20">
    <property type="entry name" value="5' to 3' exonuclease, C-terminal subdomain"/>
    <property type="match status" value="1"/>
</dbReference>
<dbReference type="Gene3D" id="3.40.1440.10">
    <property type="entry name" value="GIY-YIG endonuclease"/>
    <property type="match status" value="1"/>
</dbReference>
<dbReference type="Gene3D" id="4.10.860.10">
    <property type="entry name" value="UVR domain"/>
    <property type="match status" value="1"/>
</dbReference>
<dbReference type="Gene3D" id="3.30.420.340">
    <property type="entry name" value="UvrC, RNAse H endonuclease domain"/>
    <property type="match status" value="1"/>
</dbReference>
<dbReference type="HAMAP" id="MF_00203">
    <property type="entry name" value="UvrC"/>
    <property type="match status" value="1"/>
</dbReference>
<dbReference type="InterPro" id="IPR000305">
    <property type="entry name" value="GIY-YIG_endonuc"/>
</dbReference>
<dbReference type="InterPro" id="IPR035901">
    <property type="entry name" value="GIY-YIG_endonuc_sf"/>
</dbReference>
<dbReference type="InterPro" id="IPR047296">
    <property type="entry name" value="GIY-YIG_UvrC_Cho"/>
</dbReference>
<dbReference type="InterPro" id="IPR003583">
    <property type="entry name" value="Hlx-hairpin-Hlx_DNA-bd_motif"/>
</dbReference>
<dbReference type="InterPro" id="IPR010994">
    <property type="entry name" value="RuvA_2-like"/>
</dbReference>
<dbReference type="InterPro" id="IPR001943">
    <property type="entry name" value="UVR_dom"/>
</dbReference>
<dbReference type="InterPro" id="IPR036876">
    <property type="entry name" value="UVR_dom_sf"/>
</dbReference>
<dbReference type="InterPro" id="IPR050066">
    <property type="entry name" value="UvrABC_protein_C"/>
</dbReference>
<dbReference type="InterPro" id="IPR004791">
    <property type="entry name" value="UvrC"/>
</dbReference>
<dbReference type="InterPro" id="IPR001162">
    <property type="entry name" value="UvrC_RNase_H_dom"/>
</dbReference>
<dbReference type="InterPro" id="IPR038476">
    <property type="entry name" value="UvrC_RNase_H_dom_sf"/>
</dbReference>
<dbReference type="NCBIfam" id="TIGR00194">
    <property type="entry name" value="uvrC"/>
    <property type="match status" value="1"/>
</dbReference>
<dbReference type="PANTHER" id="PTHR30562:SF1">
    <property type="entry name" value="UVRABC SYSTEM PROTEIN C"/>
    <property type="match status" value="1"/>
</dbReference>
<dbReference type="PANTHER" id="PTHR30562">
    <property type="entry name" value="UVRC/OXIDOREDUCTASE"/>
    <property type="match status" value="1"/>
</dbReference>
<dbReference type="Pfam" id="PF01541">
    <property type="entry name" value="GIY-YIG"/>
    <property type="match status" value="1"/>
</dbReference>
<dbReference type="Pfam" id="PF14520">
    <property type="entry name" value="HHH_5"/>
    <property type="match status" value="1"/>
</dbReference>
<dbReference type="Pfam" id="PF02151">
    <property type="entry name" value="UVR"/>
    <property type="match status" value="1"/>
</dbReference>
<dbReference type="Pfam" id="PF22920">
    <property type="entry name" value="UvrC_RNaseH"/>
    <property type="match status" value="1"/>
</dbReference>
<dbReference type="Pfam" id="PF08459">
    <property type="entry name" value="UvrC_RNaseH_dom"/>
    <property type="match status" value="1"/>
</dbReference>
<dbReference type="SMART" id="SM00465">
    <property type="entry name" value="GIYc"/>
    <property type="match status" value="1"/>
</dbReference>
<dbReference type="SMART" id="SM00278">
    <property type="entry name" value="HhH1"/>
    <property type="match status" value="2"/>
</dbReference>
<dbReference type="SUPFAM" id="SSF46600">
    <property type="entry name" value="C-terminal UvrC-binding domain of UvrB"/>
    <property type="match status" value="1"/>
</dbReference>
<dbReference type="SUPFAM" id="SSF82771">
    <property type="entry name" value="GIY-YIG endonuclease"/>
    <property type="match status" value="1"/>
</dbReference>
<dbReference type="SUPFAM" id="SSF47781">
    <property type="entry name" value="RuvA domain 2-like"/>
    <property type="match status" value="1"/>
</dbReference>
<dbReference type="PROSITE" id="PS50164">
    <property type="entry name" value="GIY_YIG"/>
    <property type="match status" value="1"/>
</dbReference>
<dbReference type="PROSITE" id="PS50151">
    <property type="entry name" value="UVR"/>
    <property type="match status" value="1"/>
</dbReference>
<dbReference type="PROSITE" id="PS50165">
    <property type="entry name" value="UVRC"/>
    <property type="match status" value="1"/>
</dbReference>
<feature type="chain" id="PRO_1000099451" description="UvrABC system protein C">
    <location>
        <begin position="1"/>
        <end position="599"/>
    </location>
</feature>
<feature type="domain" description="GIY-YIG" evidence="1">
    <location>
        <begin position="18"/>
        <end position="96"/>
    </location>
</feature>
<feature type="domain" description="UVR" evidence="1">
    <location>
        <begin position="207"/>
        <end position="242"/>
    </location>
</feature>
<proteinExistence type="inferred from homology"/>
<reference key="1">
    <citation type="journal article" date="2008" name="PLoS ONE">
        <title>Comparative analysis of Acinetobacters: three genomes for three lifestyles.</title>
        <authorList>
            <person name="Vallenet D."/>
            <person name="Nordmann P."/>
            <person name="Barbe V."/>
            <person name="Poirel L."/>
            <person name="Mangenot S."/>
            <person name="Bataille E."/>
            <person name="Dossat C."/>
            <person name="Gas S."/>
            <person name="Kreimeyer A."/>
            <person name="Lenoble P."/>
            <person name="Oztas S."/>
            <person name="Poulain J."/>
            <person name="Segurens B."/>
            <person name="Robert C."/>
            <person name="Abergel C."/>
            <person name="Claverie J.-M."/>
            <person name="Raoult D."/>
            <person name="Medigue C."/>
            <person name="Weissenbach J."/>
            <person name="Cruveiller S."/>
        </authorList>
    </citation>
    <scope>NUCLEOTIDE SEQUENCE [LARGE SCALE GENOMIC DNA]</scope>
    <source>
        <strain>SDF</strain>
    </source>
</reference>
<accession>B0VLX1</accession>
<keyword id="KW-0963">Cytoplasm</keyword>
<keyword id="KW-0227">DNA damage</keyword>
<keyword id="KW-0228">DNA excision</keyword>
<keyword id="KW-0234">DNA repair</keyword>
<keyword id="KW-0267">Excision nuclease</keyword>
<keyword id="KW-0742">SOS response</keyword>
<evidence type="ECO:0000255" key="1">
    <source>
        <dbReference type="HAMAP-Rule" id="MF_00203"/>
    </source>
</evidence>
<name>UVRC_ACIBS</name>
<sequence>MNQNARPHIEKILANLTQLPGVYKMLGKEGELLYVGKAKNLKNRVSSYFVKTIEHPKTQALVARIYDIETLVTRSETEALLLEQNLIKQHRPPYNIMLRDDKSYVYIFVSADKPYPRIASGRGKGKHQIGKFFGPYPSAYSARDTLLVLQKLFNVRQCENSYFSQRKRPCLQYQIKRCSAPCVGLVSPEDYKEDVNNSIRFLQGDTKELNQELIAKMEQAAADLEFEKAVFYRDRLSLLREVQAQQAVFKVKGEADILAITYQAGVTCVQIMHVRNGRMLGGKSYFPDMLGDDLGQMLSDFMANFYFQVADEVPSELIVNTALPDRKELEEALAQQFGKKVQIKSSVRETRAEWLELAEMNVQHAIKGQLSNHLELNERFHQLEQVVGRPIDRIECFDISHTMGEAPIASCVVFDQGGARKRDYRQFAIQDITAGDDYAAMRQALTRRYKKAMLPDLLLIDGGKGQLHMAMEVMQELGLEAFMVGVSKGEGRKPGLETLHFTDGTKIQLPEDSKALHLIQQVRDEAHRFAITKHRAKRDKRRSTSVLEAIPGLGPKRRRDLLTHFGGIQGVLKASEKELTVVPGLGEVMARTIYKILHE</sequence>
<organism>
    <name type="scientific">Acinetobacter baumannii (strain SDF)</name>
    <dbReference type="NCBI Taxonomy" id="509170"/>
    <lineage>
        <taxon>Bacteria</taxon>
        <taxon>Pseudomonadati</taxon>
        <taxon>Pseudomonadota</taxon>
        <taxon>Gammaproteobacteria</taxon>
        <taxon>Moraxellales</taxon>
        <taxon>Moraxellaceae</taxon>
        <taxon>Acinetobacter</taxon>
        <taxon>Acinetobacter calcoaceticus/baumannii complex</taxon>
    </lineage>
</organism>
<protein>
    <recommendedName>
        <fullName evidence="1">UvrABC system protein C</fullName>
        <shortName evidence="1">Protein UvrC</shortName>
    </recommendedName>
    <alternativeName>
        <fullName evidence="1">Excinuclease ABC subunit C</fullName>
    </alternativeName>
</protein>